<proteinExistence type="predicted"/>
<sequence>MAASKAAKSSEDRAGGGGGGGGKEVFKAGRTLLKVLKALSLRRDSAFEANSASAANLAAEGGGGGGRAATSRSRRILLMAAFWAARRGASCAALTAARAAAFLALAMAAYLAALRARMCSRMICWPLTASLFFRAANCCLCVRGGGGGASPLQGRRSQGAVIAASSAERTTSIAVEVCLAEGTAKGPFEGWSNLCCPTRAG</sequence>
<keyword id="KW-1185">Reference proteome</keyword>
<evidence type="ECO:0000256" key="1">
    <source>
        <dbReference type="SAM" id="MobiDB-lite"/>
    </source>
</evidence>
<feature type="chain" id="PRO_0000105572" description="Uncharacterized protein in RNA2">
    <location>
        <begin position="1"/>
        <end position="201"/>
    </location>
</feature>
<feature type="region of interest" description="Disordered" evidence="1">
    <location>
        <begin position="1"/>
        <end position="22"/>
    </location>
</feature>
<reference key="1">
    <citation type="journal article" date="1991" name="J. Gen. Virol.">
        <title>Nucleotide sequence of tomato ringspot virus RNA-2.</title>
        <authorList>
            <person name="Rott M.E."/>
            <person name="Tremaine J.H."/>
            <person name="Rochon D.M."/>
        </authorList>
    </citation>
    <scope>NUCLEOTIDE SEQUENCE [GENOMIC RNA]</scope>
</reference>
<organism>
    <name type="scientific">Tomato ringspot virus (isolate raspberry)</name>
    <name type="common">ToRSV</name>
    <dbReference type="NCBI Taxonomy" id="12281"/>
    <lineage>
        <taxon>Viruses</taxon>
        <taxon>Riboviria</taxon>
        <taxon>Orthornavirae</taxon>
        <taxon>Pisuviricota</taxon>
        <taxon>Pisoniviricetes</taxon>
        <taxon>Picornavirales</taxon>
        <taxon>Secoviridae</taxon>
        <taxon>Comovirinae</taxon>
        <taxon>Nepovirus</taxon>
        <taxon>Nepovirus lycopersici</taxon>
    </lineage>
</organism>
<accession>P25245</accession>
<dbReference type="EMBL" id="D12477">
    <property type="protein sequence ID" value="BAA02044.1"/>
    <property type="molecule type" value="Genomic_RNA"/>
</dbReference>
<dbReference type="PIR" id="JQ1094">
    <property type="entry name" value="JQ1094"/>
</dbReference>
<dbReference type="Proteomes" id="UP000000410">
    <property type="component" value="Genome"/>
</dbReference>
<protein>
    <recommendedName>
        <fullName>Uncharacterized protein in RNA2</fullName>
    </recommendedName>
</protein>
<name>YR21_TORVR</name>
<organismHost>
    <name type="scientific">Nicotiana tabacum</name>
    <name type="common">Common tobacco</name>
    <dbReference type="NCBI Taxonomy" id="4097"/>
</organismHost>
<organismHost>
    <name type="scientific">Pelargonium</name>
    <dbReference type="NCBI Taxonomy" id="4030"/>
</organismHost>
<organismHost>
    <name type="scientific">Prunus</name>
    <dbReference type="NCBI Taxonomy" id="3754"/>
</organismHost>
<organismHost>
    <name type="scientific">Rubus</name>
    <name type="common">bramble</name>
    <dbReference type="NCBI Taxonomy" id="23216"/>
</organismHost>